<proteinExistence type="evidence at protein level"/>
<reference key="1">
    <citation type="journal article" date="1995" name="Yeast">
        <title>Sequence and analysis of 24 kb on chromosome II of Saccharomyces cerevisiae.</title>
        <authorList>
            <person name="Aljinovic G."/>
            <person name="Pohl T.M."/>
        </authorList>
    </citation>
    <scope>NUCLEOTIDE SEQUENCE [GENOMIC DNA]</scope>
    <source>
        <strain>ATCC 204508 / S288c</strain>
    </source>
</reference>
<reference key="2">
    <citation type="journal article" date="1994" name="EMBO J.">
        <title>Complete DNA sequence of yeast chromosome II.</title>
        <authorList>
            <person name="Feldmann H."/>
            <person name="Aigle M."/>
            <person name="Aljinovic G."/>
            <person name="Andre B."/>
            <person name="Baclet M.C."/>
            <person name="Barthe C."/>
            <person name="Baur A."/>
            <person name="Becam A.-M."/>
            <person name="Biteau N."/>
            <person name="Boles E."/>
            <person name="Brandt T."/>
            <person name="Brendel M."/>
            <person name="Brueckner M."/>
            <person name="Bussereau F."/>
            <person name="Christiansen C."/>
            <person name="Contreras R."/>
            <person name="Crouzet M."/>
            <person name="Cziepluch C."/>
            <person name="Demolis N."/>
            <person name="Delaveau T."/>
            <person name="Doignon F."/>
            <person name="Domdey H."/>
            <person name="Duesterhus S."/>
            <person name="Dubois E."/>
            <person name="Dujon B."/>
            <person name="El Bakkoury M."/>
            <person name="Entian K.-D."/>
            <person name="Feuermann M."/>
            <person name="Fiers W."/>
            <person name="Fobo G.M."/>
            <person name="Fritz C."/>
            <person name="Gassenhuber J."/>
            <person name="Glansdorff N."/>
            <person name="Goffeau A."/>
            <person name="Grivell L.A."/>
            <person name="de Haan M."/>
            <person name="Hein C."/>
            <person name="Herbert C.J."/>
            <person name="Hollenberg C.P."/>
            <person name="Holmstroem K."/>
            <person name="Jacq C."/>
            <person name="Jacquet M."/>
            <person name="Jauniaux J.-C."/>
            <person name="Jonniaux J.-L."/>
            <person name="Kallesoee T."/>
            <person name="Kiesau P."/>
            <person name="Kirchrath L."/>
            <person name="Koetter P."/>
            <person name="Korol S."/>
            <person name="Liebl S."/>
            <person name="Logghe M."/>
            <person name="Lohan A.J.E."/>
            <person name="Louis E.J."/>
            <person name="Li Z.Y."/>
            <person name="Maat M.J."/>
            <person name="Mallet L."/>
            <person name="Mannhaupt G."/>
            <person name="Messenguy F."/>
            <person name="Miosga T."/>
            <person name="Molemans F."/>
            <person name="Mueller S."/>
            <person name="Nasr F."/>
            <person name="Obermaier B."/>
            <person name="Perea J."/>
            <person name="Pierard A."/>
            <person name="Piravandi E."/>
            <person name="Pohl F.M."/>
            <person name="Pohl T.M."/>
            <person name="Potier S."/>
            <person name="Proft M."/>
            <person name="Purnelle B."/>
            <person name="Ramezani Rad M."/>
            <person name="Rieger M."/>
            <person name="Rose M."/>
            <person name="Schaaff-Gerstenschlaeger I."/>
            <person name="Scherens B."/>
            <person name="Schwarzlose C."/>
            <person name="Skala J."/>
            <person name="Slonimski P.P."/>
            <person name="Smits P.H.M."/>
            <person name="Souciet J.-L."/>
            <person name="Steensma H.Y."/>
            <person name="Stucka R."/>
            <person name="Urrestarazu L.A."/>
            <person name="van der Aart Q.J.M."/>
            <person name="Van Dyck L."/>
            <person name="Vassarotti A."/>
            <person name="Vetter I."/>
            <person name="Vierendeels F."/>
            <person name="Vissers S."/>
            <person name="Wagner G."/>
            <person name="de Wergifosse P."/>
            <person name="Wolfe K.H."/>
            <person name="Zagulski M."/>
            <person name="Zimmermann F.K."/>
            <person name="Mewes H.-W."/>
            <person name="Kleine K."/>
        </authorList>
    </citation>
    <scope>NUCLEOTIDE SEQUENCE [LARGE SCALE GENOMIC DNA]</scope>
    <source>
        <strain>ATCC 204508 / S288c</strain>
    </source>
</reference>
<reference key="3">
    <citation type="journal article" date="2014" name="G3 (Bethesda)">
        <title>The reference genome sequence of Saccharomyces cerevisiae: Then and now.</title>
        <authorList>
            <person name="Engel S.R."/>
            <person name="Dietrich F.S."/>
            <person name="Fisk D.G."/>
            <person name="Binkley G."/>
            <person name="Balakrishnan R."/>
            <person name="Costanzo M.C."/>
            <person name="Dwight S.S."/>
            <person name="Hitz B.C."/>
            <person name="Karra K."/>
            <person name="Nash R.S."/>
            <person name="Weng S."/>
            <person name="Wong E.D."/>
            <person name="Lloyd P."/>
            <person name="Skrzypek M.S."/>
            <person name="Miyasato S.R."/>
            <person name="Simison M."/>
            <person name="Cherry J.M."/>
        </authorList>
    </citation>
    <scope>GENOME REANNOTATION</scope>
    <source>
        <strain>ATCC 204508 / S288c</strain>
    </source>
</reference>
<reference key="4">
    <citation type="journal article" date="2007" name="Genome Res.">
        <title>Approaching a complete repository of sequence-verified protein-encoding clones for Saccharomyces cerevisiae.</title>
        <authorList>
            <person name="Hu Y."/>
            <person name="Rolfs A."/>
            <person name="Bhullar B."/>
            <person name="Murthy T.V.S."/>
            <person name="Zhu C."/>
            <person name="Berger M.F."/>
            <person name="Camargo A.A."/>
            <person name="Kelley F."/>
            <person name="McCarron S."/>
            <person name="Jepson D."/>
            <person name="Richardson A."/>
            <person name="Raphael J."/>
            <person name="Moreira D."/>
            <person name="Taycher E."/>
            <person name="Zuo D."/>
            <person name="Mohr S."/>
            <person name="Kane M.F."/>
            <person name="Williamson J."/>
            <person name="Simpson A.J.G."/>
            <person name="Bulyk M.L."/>
            <person name="Harlow E."/>
            <person name="Marsischky G."/>
            <person name="Kolodner R.D."/>
            <person name="LaBaer J."/>
        </authorList>
    </citation>
    <scope>NUCLEOTIDE SEQUENCE [GENOMIC DNA]</scope>
    <source>
        <strain>ATCC 204508 / S288c</strain>
    </source>
</reference>
<reference key="5">
    <citation type="journal article" date="2003" name="Nature">
        <title>Global analysis of protein localization in budding yeast.</title>
        <authorList>
            <person name="Huh W.-K."/>
            <person name="Falvo J.V."/>
            <person name="Gerke L.C."/>
            <person name="Carroll A.S."/>
            <person name="Howson R.W."/>
            <person name="Weissman J.S."/>
            <person name="O'Shea E.K."/>
        </authorList>
    </citation>
    <scope>SUBCELLULAR LOCATION [LARGE SCALE ANALYSIS]</scope>
</reference>
<reference key="6">
    <citation type="journal article" date="2003" name="Nature">
        <title>Global analysis of protein expression in yeast.</title>
        <authorList>
            <person name="Ghaemmaghami S."/>
            <person name="Huh W.-K."/>
            <person name="Bower K."/>
            <person name="Howson R.W."/>
            <person name="Belle A."/>
            <person name="Dephoure N."/>
            <person name="O'Shea E.K."/>
            <person name="Weissman J.S."/>
        </authorList>
    </citation>
    <scope>LEVEL OF PROTEIN EXPRESSION [LARGE SCALE ANALYSIS]</scope>
</reference>
<reference key="7">
    <citation type="journal article" date="2006" name="Genetics">
        <title>Different mating-type-regulated genes affect the DNA repair defects of Saccharomyces RAD51, RAD52 and RAD55 mutants.</title>
        <authorList>
            <person name="Valencia-Burton M."/>
            <person name="Oki M."/>
            <person name="Johnson J."/>
            <person name="Seier T.A."/>
            <person name="Kamakaka R."/>
            <person name="Haber J.E."/>
        </authorList>
    </citation>
    <scope>GENE NAME</scope>
</reference>
<reference key="8">
    <citation type="journal article" date="2008" name="J. Cell Biol.">
        <title>Plasma membrane microdomains regulate turnover of transport proteins in yeast.</title>
        <authorList>
            <person name="Grossmann G."/>
            <person name="Malinsky J."/>
            <person name="Stahlschmidt W."/>
            <person name="Loibl M."/>
            <person name="Weig-Meckl I."/>
            <person name="Frommer W.B."/>
            <person name="Opekarova M."/>
            <person name="Tanner W."/>
        </authorList>
    </citation>
    <scope>SUBCELLULAR LOCATION</scope>
</reference>
<gene>
    <name type="primary">RFS1</name>
    <name type="ordered locus">YBR052C</name>
    <name type="ORF">YBR0505</name>
</gene>
<organism>
    <name type="scientific">Saccharomyces cerevisiae (strain ATCC 204508 / S288c)</name>
    <name type="common">Baker's yeast</name>
    <dbReference type="NCBI Taxonomy" id="559292"/>
    <lineage>
        <taxon>Eukaryota</taxon>
        <taxon>Fungi</taxon>
        <taxon>Dikarya</taxon>
        <taxon>Ascomycota</taxon>
        <taxon>Saccharomycotina</taxon>
        <taxon>Saccharomycetes</taxon>
        <taxon>Saccharomycetales</taxon>
        <taxon>Saccharomycetaceae</taxon>
        <taxon>Saccharomyces</taxon>
    </lineage>
</organism>
<comment type="interaction">
    <interactant intactId="EBI-21445">
        <id>P38234</id>
    </interactant>
    <interactant intactId="EBI-14064">
        <id>Q12335</id>
        <label>PST2</label>
    </interactant>
    <organismsDiffer>false</organismsDiffer>
    <experiments>5</experiments>
</comment>
<comment type="subcellular location">
    <subcellularLocation>
        <location evidence="2">Cytoplasm</location>
    </subcellularLocation>
    <subcellularLocation>
        <location evidence="4">Membrane raft</location>
    </subcellularLocation>
</comment>
<comment type="miscellaneous">
    <text evidence="3">Present with 7060 molecules/cell in log phase SD medium.</text>
</comment>
<comment type="similarity">
    <text evidence="5">Belongs to the WrbA family.</text>
</comment>
<name>RFS1_YEAST</name>
<dbReference type="EMBL" id="Z35921">
    <property type="protein sequence ID" value="CAA84995.1"/>
    <property type="molecule type" value="Genomic_DNA"/>
</dbReference>
<dbReference type="EMBL" id="Z46260">
    <property type="protein sequence ID" value="CAA86395.1"/>
    <property type="molecule type" value="Genomic_DNA"/>
</dbReference>
<dbReference type="EMBL" id="AY557709">
    <property type="protein sequence ID" value="AAS56035.1"/>
    <property type="molecule type" value="Genomic_DNA"/>
</dbReference>
<dbReference type="EMBL" id="BK006936">
    <property type="protein sequence ID" value="DAA07171.1"/>
    <property type="molecule type" value="Genomic_DNA"/>
</dbReference>
<dbReference type="PIR" id="S45910">
    <property type="entry name" value="S45910"/>
</dbReference>
<dbReference type="RefSeq" id="NP_009608.1">
    <property type="nucleotide sequence ID" value="NM_001178400.1"/>
</dbReference>
<dbReference type="SMR" id="P38234"/>
<dbReference type="BioGRID" id="32753">
    <property type="interactions" value="70"/>
</dbReference>
<dbReference type="DIP" id="DIP-1761N"/>
<dbReference type="FunCoup" id="P38234">
    <property type="interactions" value="245"/>
</dbReference>
<dbReference type="IntAct" id="P38234">
    <property type="interactions" value="35"/>
</dbReference>
<dbReference type="MINT" id="P38234"/>
<dbReference type="STRING" id="4932.YBR052C"/>
<dbReference type="iPTMnet" id="P38234"/>
<dbReference type="PaxDb" id="4932-YBR052C"/>
<dbReference type="PeptideAtlas" id="P38234"/>
<dbReference type="EnsemblFungi" id="YBR052C_mRNA">
    <property type="protein sequence ID" value="YBR052C"/>
    <property type="gene ID" value="YBR052C"/>
</dbReference>
<dbReference type="GeneID" id="852341"/>
<dbReference type="KEGG" id="sce:YBR052C"/>
<dbReference type="AGR" id="SGD:S000000256"/>
<dbReference type="SGD" id="S000000256">
    <property type="gene designation" value="RFS1"/>
</dbReference>
<dbReference type="VEuPathDB" id="FungiDB:YBR052C"/>
<dbReference type="eggNOG" id="KOG3135">
    <property type="taxonomic scope" value="Eukaryota"/>
</dbReference>
<dbReference type="GeneTree" id="ENSGT00940000176381"/>
<dbReference type="HOGENOM" id="CLU_051402_0_1_1"/>
<dbReference type="InParanoid" id="P38234"/>
<dbReference type="OMA" id="MYGHVEV"/>
<dbReference type="OrthoDB" id="504689at2759"/>
<dbReference type="BioCyc" id="YEAST:G3O-29023-MONOMER"/>
<dbReference type="BioGRID-ORCS" id="852341">
    <property type="hits" value="2 hits in 10 CRISPR screens"/>
</dbReference>
<dbReference type="PRO" id="PR:P38234"/>
<dbReference type="Proteomes" id="UP000002311">
    <property type="component" value="Chromosome II"/>
</dbReference>
<dbReference type="RNAct" id="P38234">
    <property type="molecule type" value="protein"/>
</dbReference>
<dbReference type="GO" id="GO:0005737">
    <property type="term" value="C:cytoplasm"/>
    <property type="evidence" value="ECO:0000314"/>
    <property type="project" value="SGD"/>
</dbReference>
<dbReference type="GO" id="GO:0032126">
    <property type="term" value="C:eisosome"/>
    <property type="evidence" value="ECO:0000314"/>
    <property type="project" value="SGD"/>
</dbReference>
<dbReference type="GO" id="GO:0016020">
    <property type="term" value="C:membrane"/>
    <property type="evidence" value="ECO:0000318"/>
    <property type="project" value="GO_Central"/>
</dbReference>
<dbReference type="GO" id="GO:0045121">
    <property type="term" value="C:membrane raft"/>
    <property type="evidence" value="ECO:0007669"/>
    <property type="project" value="UniProtKB-SubCell"/>
</dbReference>
<dbReference type="GO" id="GO:0010181">
    <property type="term" value="F:FMN binding"/>
    <property type="evidence" value="ECO:0007669"/>
    <property type="project" value="InterPro"/>
</dbReference>
<dbReference type="GO" id="GO:0016491">
    <property type="term" value="F:oxidoreductase activity"/>
    <property type="evidence" value="ECO:0007669"/>
    <property type="project" value="InterPro"/>
</dbReference>
<dbReference type="GO" id="GO:0160020">
    <property type="term" value="P:positive regulation of ferroptosis"/>
    <property type="evidence" value="ECO:0000315"/>
    <property type="project" value="SGD"/>
</dbReference>
<dbReference type="FunFam" id="3.40.50.360:FF:000066">
    <property type="entry name" value="RFS1p protein"/>
    <property type="match status" value="1"/>
</dbReference>
<dbReference type="Gene3D" id="3.40.50.360">
    <property type="match status" value="1"/>
</dbReference>
<dbReference type="InterPro" id="IPR008254">
    <property type="entry name" value="Flavodoxin/NO_synth"/>
</dbReference>
<dbReference type="InterPro" id="IPR029039">
    <property type="entry name" value="Flavoprotein-like_sf"/>
</dbReference>
<dbReference type="InterPro" id="IPR005025">
    <property type="entry name" value="FMN_Rdtase-like_dom"/>
</dbReference>
<dbReference type="PANTHER" id="PTHR30546">
    <property type="entry name" value="FLAVODOXIN-RELATED PROTEIN WRBA-RELATED"/>
    <property type="match status" value="1"/>
</dbReference>
<dbReference type="PANTHER" id="PTHR30546:SF23">
    <property type="entry name" value="FLAVOPROTEIN-LIKE PROTEIN YCP4-RELATED"/>
    <property type="match status" value="1"/>
</dbReference>
<dbReference type="Pfam" id="PF03358">
    <property type="entry name" value="FMN_red"/>
    <property type="match status" value="1"/>
</dbReference>
<dbReference type="SUPFAM" id="SSF52218">
    <property type="entry name" value="Flavoproteins"/>
    <property type="match status" value="1"/>
</dbReference>
<dbReference type="PROSITE" id="PS50902">
    <property type="entry name" value="FLAVODOXIN_LIKE"/>
    <property type="match status" value="1"/>
</dbReference>
<accession>P38234</accession>
<accession>D6VQ51</accession>
<evidence type="ECO:0000255" key="1">
    <source>
        <dbReference type="PROSITE-ProRule" id="PRU00088"/>
    </source>
</evidence>
<evidence type="ECO:0000269" key="2">
    <source>
    </source>
</evidence>
<evidence type="ECO:0000269" key="3">
    <source>
    </source>
</evidence>
<evidence type="ECO:0000269" key="4">
    <source>
    </source>
</evidence>
<evidence type="ECO:0000305" key="5"/>
<sequence length="210" mass="22921">MPKVAILIYSVDDIIATLAENEKKGIEIAGGEAEIFQVPDVSYKTEYATEEGKEAAKVAKTNADFSYKILTRETLVEYDYYLFGIPTKFGNFPAEWKSFWDSNTGGLWAKGSLHGKIAGLFVSGAISGKGDTEMCIMNAMSTLVHHGVIYVPLGYKNAYKELTDVEDVNGSCAWGAGCVSGIDGGRPPSLSELRVHQLQGKAFYDRIKDL</sequence>
<protein>
    <recommendedName>
        <fullName>Protein RFS1</fullName>
    </recommendedName>
    <alternativeName>
        <fullName>RAD55 suppressor protein 1</fullName>
    </alternativeName>
</protein>
<feature type="chain" id="PRO_0000200767" description="Protein RFS1">
    <location>
        <begin position="1"/>
        <end position="210"/>
    </location>
</feature>
<feature type="domain" description="Flavodoxin-like" evidence="1">
    <location>
        <begin position="4"/>
        <end position="203"/>
    </location>
</feature>
<keyword id="KW-0963">Cytoplasm</keyword>
<keyword id="KW-0472">Membrane</keyword>
<keyword id="KW-1185">Reference proteome</keyword>